<protein>
    <recommendedName>
        <fullName evidence="1">Spermidine export protein MdtI</fullName>
    </recommendedName>
</protein>
<sequence length="109" mass="11935">MQQLEFYPIAFLILAVMLEIVANILLKMSDGFRRKWLGILSLLSVLGAFSALAQAVKGIELSVAYAMWGGFGIAATVAAGWILFNQRLNYKGWIGLILLLAGMVMIKLS</sequence>
<comment type="function">
    <text evidence="1">Catalyzes the excretion of spermidine.</text>
</comment>
<comment type="subunit">
    <text evidence="1">Forms a complex with MdtJ.</text>
</comment>
<comment type="subcellular location">
    <subcellularLocation>
        <location evidence="1">Cell inner membrane</location>
        <topology evidence="1">Multi-pass membrane protein</topology>
    </subcellularLocation>
</comment>
<comment type="similarity">
    <text evidence="1">Belongs to the drug/metabolite transporter (DMT) superfamily. Small multidrug resistance (SMR) (TC 2.A.7.1) family. MdtI subfamily.</text>
</comment>
<feature type="chain" id="PRO_0000331161" description="Spermidine export protein MdtI">
    <location>
        <begin position="1"/>
        <end position="109"/>
    </location>
</feature>
<feature type="transmembrane region" description="Helical" evidence="1">
    <location>
        <begin position="6"/>
        <end position="26"/>
    </location>
</feature>
<feature type="transmembrane region" description="Helical" evidence="1">
    <location>
        <begin position="36"/>
        <end position="56"/>
    </location>
</feature>
<feature type="transmembrane region" description="Helical" evidence="1">
    <location>
        <begin position="64"/>
        <end position="84"/>
    </location>
</feature>
<feature type="transmembrane region" description="Helical" evidence="1">
    <location>
        <begin position="88"/>
        <end position="108"/>
    </location>
</feature>
<proteinExistence type="inferred from homology"/>
<organism>
    <name type="scientific">Yersinia pseudotuberculosis serotype I (strain IP32953)</name>
    <dbReference type="NCBI Taxonomy" id="273123"/>
    <lineage>
        <taxon>Bacteria</taxon>
        <taxon>Pseudomonadati</taxon>
        <taxon>Pseudomonadota</taxon>
        <taxon>Gammaproteobacteria</taxon>
        <taxon>Enterobacterales</taxon>
        <taxon>Yersiniaceae</taxon>
        <taxon>Yersinia</taxon>
    </lineage>
</organism>
<keyword id="KW-0997">Cell inner membrane</keyword>
<keyword id="KW-1003">Cell membrane</keyword>
<keyword id="KW-0472">Membrane</keyword>
<keyword id="KW-0812">Transmembrane</keyword>
<keyword id="KW-1133">Transmembrane helix</keyword>
<keyword id="KW-0813">Transport</keyword>
<evidence type="ECO:0000255" key="1">
    <source>
        <dbReference type="HAMAP-Rule" id="MF_01597"/>
    </source>
</evidence>
<name>MDTI_YERPS</name>
<reference key="1">
    <citation type="journal article" date="2004" name="Proc. Natl. Acad. Sci. U.S.A.">
        <title>Insights into the evolution of Yersinia pestis through whole-genome comparison with Yersinia pseudotuberculosis.</title>
        <authorList>
            <person name="Chain P.S.G."/>
            <person name="Carniel E."/>
            <person name="Larimer F.W."/>
            <person name="Lamerdin J."/>
            <person name="Stoutland P.O."/>
            <person name="Regala W.M."/>
            <person name="Georgescu A.M."/>
            <person name="Vergez L.M."/>
            <person name="Land M.L."/>
            <person name="Motin V.L."/>
            <person name="Brubaker R.R."/>
            <person name="Fowler J."/>
            <person name="Hinnebusch J."/>
            <person name="Marceau M."/>
            <person name="Medigue C."/>
            <person name="Simonet M."/>
            <person name="Chenal-Francisque V."/>
            <person name="Souza B."/>
            <person name="Dacheux D."/>
            <person name="Elliott J.M."/>
            <person name="Derbise A."/>
            <person name="Hauser L.J."/>
            <person name="Garcia E."/>
        </authorList>
    </citation>
    <scope>NUCLEOTIDE SEQUENCE [LARGE SCALE GENOMIC DNA]</scope>
    <source>
        <strain>IP32953</strain>
    </source>
</reference>
<accession>Q66AS8</accession>
<gene>
    <name evidence="1" type="primary">mdtI</name>
    <name type="ordered locus">YPTB2052</name>
</gene>
<dbReference type="EMBL" id="BX936398">
    <property type="protein sequence ID" value="CAH21290.1"/>
    <property type="molecule type" value="Genomic_DNA"/>
</dbReference>
<dbReference type="RefSeq" id="WP_011192418.1">
    <property type="nucleotide sequence ID" value="NC_006155.1"/>
</dbReference>
<dbReference type="SMR" id="Q66AS8"/>
<dbReference type="GeneID" id="49785957"/>
<dbReference type="KEGG" id="ypo:BZ17_412"/>
<dbReference type="KEGG" id="yps:YPTB2052"/>
<dbReference type="PATRIC" id="fig|273123.14.peg.440"/>
<dbReference type="Proteomes" id="UP000001011">
    <property type="component" value="Chromosome"/>
</dbReference>
<dbReference type="GO" id="GO:0005886">
    <property type="term" value="C:plasma membrane"/>
    <property type="evidence" value="ECO:0007669"/>
    <property type="project" value="UniProtKB-SubCell"/>
</dbReference>
<dbReference type="GO" id="GO:0015199">
    <property type="term" value="F:amino-acid betaine transmembrane transporter activity"/>
    <property type="evidence" value="ECO:0007669"/>
    <property type="project" value="TreeGrafter"/>
</dbReference>
<dbReference type="GO" id="GO:0015297">
    <property type="term" value="F:antiporter activity"/>
    <property type="evidence" value="ECO:0007669"/>
    <property type="project" value="TreeGrafter"/>
</dbReference>
<dbReference type="GO" id="GO:0015220">
    <property type="term" value="F:choline transmembrane transporter activity"/>
    <property type="evidence" value="ECO:0007669"/>
    <property type="project" value="TreeGrafter"/>
</dbReference>
<dbReference type="GO" id="GO:0015606">
    <property type="term" value="F:spermidine transmembrane transporter activity"/>
    <property type="evidence" value="ECO:0007669"/>
    <property type="project" value="UniProtKB-UniRule"/>
</dbReference>
<dbReference type="GO" id="GO:0031460">
    <property type="term" value="P:glycine betaine transport"/>
    <property type="evidence" value="ECO:0007669"/>
    <property type="project" value="TreeGrafter"/>
</dbReference>
<dbReference type="FunFam" id="1.10.3730.20:FF:000001">
    <property type="entry name" value="Quaternary ammonium compound resistance transporter SugE"/>
    <property type="match status" value="1"/>
</dbReference>
<dbReference type="Gene3D" id="1.10.3730.20">
    <property type="match status" value="1"/>
</dbReference>
<dbReference type="HAMAP" id="MF_01597">
    <property type="entry name" value="MdtI"/>
    <property type="match status" value="1"/>
</dbReference>
<dbReference type="InterPro" id="IPR000390">
    <property type="entry name" value="Small_drug/metabolite_transptr"/>
</dbReference>
<dbReference type="InterPro" id="IPR045324">
    <property type="entry name" value="Small_multidrug_res"/>
</dbReference>
<dbReference type="InterPro" id="IPR023737">
    <property type="entry name" value="Spermidine_export_MdtI"/>
</dbReference>
<dbReference type="NCBIfam" id="NF007934">
    <property type="entry name" value="PRK10650.1"/>
    <property type="match status" value="1"/>
</dbReference>
<dbReference type="PANTHER" id="PTHR30561">
    <property type="entry name" value="SMR FAMILY PROTON-DEPENDENT DRUG EFFLUX TRANSPORTER SUGE"/>
    <property type="match status" value="1"/>
</dbReference>
<dbReference type="PANTHER" id="PTHR30561:SF6">
    <property type="entry name" value="SPERMIDINE EXPORT PROTEIN MDTI"/>
    <property type="match status" value="1"/>
</dbReference>
<dbReference type="Pfam" id="PF00893">
    <property type="entry name" value="Multi_Drug_Res"/>
    <property type="match status" value="1"/>
</dbReference>
<dbReference type="SUPFAM" id="SSF103481">
    <property type="entry name" value="Multidrug resistance efflux transporter EmrE"/>
    <property type="match status" value="1"/>
</dbReference>